<comment type="function">
    <text evidence="1">Part of a membrane-bound complex that couples electron transfer with translocation of ions across the membrane. Required to maintain the reduced state of SoxR.</text>
</comment>
<comment type="subunit">
    <text evidence="1">The complex is composed of six subunits: RsxA, RsxB, RsxC, RsxD, RsxE and RsxG.</text>
</comment>
<comment type="subcellular location">
    <subcellularLocation>
        <location evidence="1">Cell inner membrane</location>
        <topology evidence="1">Multi-pass membrane protein</topology>
    </subcellularLocation>
</comment>
<comment type="similarity">
    <text evidence="1">Belongs to the NqrDE/RnfAE family.</text>
</comment>
<reference key="1">
    <citation type="journal article" date="2009" name="PLoS Genet.">
        <title>Organised genome dynamics in the Escherichia coli species results in highly diverse adaptive paths.</title>
        <authorList>
            <person name="Touchon M."/>
            <person name="Hoede C."/>
            <person name="Tenaillon O."/>
            <person name="Barbe V."/>
            <person name="Baeriswyl S."/>
            <person name="Bidet P."/>
            <person name="Bingen E."/>
            <person name="Bonacorsi S."/>
            <person name="Bouchier C."/>
            <person name="Bouvet O."/>
            <person name="Calteau A."/>
            <person name="Chiapello H."/>
            <person name="Clermont O."/>
            <person name="Cruveiller S."/>
            <person name="Danchin A."/>
            <person name="Diard M."/>
            <person name="Dossat C."/>
            <person name="Karoui M.E."/>
            <person name="Frapy E."/>
            <person name="Garry L."/>
            <person name="Ghigo J.M."/>
            <person name="Gilles A.M."/>
            <person name="Johnson J."/>
            <person name="Le Bouguenec C."/>
            <person name="Lescat M."/>
            <person name="Mangenot S."/>
            <person name="Martinez-Jehanne V."/>
            <person name="Matic I."/>
            <person name="Nassif X."/>
            <person name="Oztas S."/>
            <person name="Petit M.A."/>
            <person name="Pichon C."/>
            <person name="Rouy Z."/>
            <person name="Ruf C.S."/>
            <person name="Schneider D."/>
            <person name="Tourret J."/>
            <person name="Vacherie B."/>
            <person name="Vallenet D."/>
            <person name="Medigue C."/>
            <person name="Rocha E.P.C."/>
            <person name="Denamur E."/>
        </authorList>
    </citation>
    <scope>NUCLEOTIDE SEQUENCE [LARGE SCALE GENOMIC DNA]</scope>
    <source>
        <strain>ATCC 35469 / DSM 13698 / BCRC 15582 / CCUG 18766 / IAM 14443 / JCM 21226 / LMG 7866 / NBRC 102419 / NCTC 12128 / CDC 0568-73</strain>
    </source>
</reference>
<gene>
    <name evidence="1" type="primary">rsxE</name>
    <name type="ordered locus">EFER_1411</name>
</gene>
<proteinExistence type="inferred from homology"/>
<name>RSXE_ESCF3</name>
<feature type="chain" id="PRO_1000125855" description="Ion-translocating oxidoreductase complex subunit E">
    <location>
        <begin position="1"/>
        <end position="230"/>
    </location>
</feature>
<feature type="transmembrane region" description="Helical" evidence="1">
    <location>
        <begin position="18"/>
        <end position="38"/>
    </location>
</feature>
<feature type="transmembrane region" description="Helical" evidence="1">
    <location>
        <begin position="39"/>
        <end position="59"/>
    </location>
</feature>
<feature type="transmembrane region" description="Helical" evidence="1">
    <location>
        <begin position="63"/>
        <end position="83"/>
    </location>
</feature>
<feature type="transmembrane region" description="Helical" evidence="1">
    <location>
        <begin position="86"/>
        <end position="106"/>
    </location>
</feature>
<feature type="transmembrane region" description="Helical" evidence="1">
    <location>
        <begin position="128"/>
        <end position="148"/>
    </location>
</feature>
<feature type="transmembrane region" description="Helical" evidence="1">
    <location>
        <begin position="182"/>
        <end position="202"/>
    </location>
</feature>
<protein>
    <recommendedName>
        <fullName evidence="1">Ion-translocating oxidoreductase complex subunit E</fullName>
        <ecNumber evidence="1">7.-.-.-</ecNumber>
    </recommendedName>
    <alternativeName>
        <fullName evidence="1">Rsx electron transport complex subunit E</fullName>
    </alternativeName>
</protein>
<keyword id="KW-0997">Cell inner membrane</keyword>
<keyword id="KW-1003">Cell membrane</keyword>
<keyword id="KW-0249">Electron transport</keyword>
<keyword id="KW-0472">Membrane</keyword>
<keyword id="KW-1278">Translocase</keyword>
<keyword id="KW-0812">Transmembrane</keyword>
<keyword id="KW-1133">Transmembrane helix</keyword>
<keyword id="KW-0813">Transport</keyword>
<accession>B7LQN8</accession>
<dbReference type="EC" id="7.-.-.-" evidence="1"/>
<dbReference type="EMBL" id="CU928158">
    <property type="protein sequence ID" value="CAQ88931.1"/>
    <property type="molecule type" value="Genomic_DNA"/>
</dbReference>
<dbReference type="RefSeq" id="WP_001289670.1">
    <property type="nucleotide sequence ID" value="NC_011740.1"/>
</dbReference>
<dbReference type="SMR" id="B7LQN8"/>
<dbReference type="KEGG" id="efe:EFER_1411"/>
<dbReference type="HOGENOM" id="CLU_046659_1_0_6"/>
<dbReference type="OrthoDB" id="9782945at2"/>
<dbReference type="Proteomes" id="UP000000745">
    <property type="component" value="Chromosome"/>
</dbReference>
<dbReference type="GO" id="GO:0005886">
    <property type="term" value="C:plasma membrane"/>
    <property type="evidence" value="ECO:0007669"/>
    <property type="project" value="UniProtKB-SubCell"/>
</dbReference>
<dbReference type="GO" id="GO:0022900">
    <property type="term" value="P:electron transport chain"/>
    <property type="evidence" value="ECO:0007669"/>
    <property type="project" value="UniProtKB-UniRule"/>
</dbReference>
<dbReference type="HAMAP" id="MF_00478">
    <property type="entry name" value="RsxE_RnfE"/>
    <property type="match status" value="1"/>
</dbReference>
<dbReference type="InterPro" id="IPR003667">
    <property type="entry name" value="NqrDE/RnfAE"/>
</dbReference>
<dbReference type="InterPro" id="IPR010968">
    <property type="entry name" value="RnfE"/>
</dbReference>
<dbReference type="NCBIfam" id="NF009070">
    <property type="entry name" value="PRK12405.1"/>
    <property type="match status" value="1"/>
</dbReference>
<dbReference type="NCBIfam" id="TIGR01948">
    <property type="entry name" value="rnfE"/>
    <property type="match status" value="1"/>
</dbReference>
<dbReference type="PANTHER" id="PTHR30586">
    <property type="entry name" value="ELECTRON TRANSPORT COMPLEX PROTEIN RNFE"/>
    <property type="match status" value="1"/>
</dbReference>
<dbReference type="PANTHER" id="PTHR30586:SF0">
    <property type="entry name" value="ION-TRANSLOCATING OXIDOREDUCTASE COMPLEX SUBUNIT E"/>
    <property type="match status" value="1"/>
</dbReference>
<dbReference type="Pfam" id="PF02508">
    <property type="entry name" value="Rnf-Nqr"/>
    <property type="match status" value="1"/>
</dbReference>
<dbReference type="PIRSF" id="PIRSF006102">
    <property type="entry name" value="NQR_DE"/>
    <property type="match status" value="1"/>
</dbReference>
<organism>
    <name type="scientific">Escherichia fergusonii (strain ATCC 35469 / DSM 13698 / CCUG 18766 / IAM 14443 / JCM 21226 / LMG 7866 / NBRC 102419 / NCTC 12128 / CDC 0568-73)</name>
    <dbReference type="NCBI Taxonomy" id="585054"/>
    <lineage>
        <taxon>Bacteria</taxon>
        <taxon>Pseudomonadati</taxon>
        <taxon>Pseudomonadota</taxon>
        <taxon>Gammaproteobacteria</taxon>
        <taxon>Enterobacterales</taxon>
        <taxon>Enterobacteriaceae</taxon>
        <taxon>Escherichia</taxon>
    </lineage>
</organism>
<evidence type="ECO:0000255" key="1">
    <source>
        <dbReference type="HAMAP-Rule" id="MF_00478"/>
    </source>
</evidence>
<sequence length="230" mass="24408">MSEIKDVIVQGLWKNNSALVQLLGMCPLLAVTSTATNALGLGLATTLVLTLTNLTISTLRRWTPTEIRIPIYVMIIASVVSAVQMLINAYAFGLYQSLGIFIPLIVTNCIVVGRAEAFAAKKGPALSALDGFAIGMGATGAMFVLGAMREIIGNGTLFDGADALLGNWAKVLRVEIFHTDSPFLLAMLPPGAFIGLGLMLAGKYLIDEKMKKRRAKTVVNEIPAGETGKV</sequence>